<organism>
    <name type="scientific">Staphylococcus aureus (strain NCTC 8325 / PS 47)</name>
    <dbReference type="NCBI Taxonomy" id="93061"/>
    <lineage>
        <taxon>Bacteria</taxon>
        <taxon>Bacillati</taxon>
        <taxon>Bacillota</taxon>
        <taxon>Bacilli</taxon>
        <taxon>Bacillales</taxon>
        <taxon>Staphylococcaceae</taxon>
        <taxon>Staphylococcus</taxon>
    </lineage>
</organism>
<reference key="1">
    <citation type="journal article" date="2001" name="Mol. Genet. Genomics">
        <title>Genetic identification of two distinct DNA polymerases, DnaE and PolC, that are essential for chromosomal DNA replication in Staphylococcus aureus.</title>
        <authorList>
            <person name="Inoue R."/>
            <person name="Kaito C."/>
            <person name="Tanabe M."/>
            <person name="Kamura K."/>
            <person name="Akimitsu N."/>
            <person name="Sekimizu K."/>
        </authorList>
    </citation>
    <scope>NUCLEOTIDE SEQUENCE [GENOMIC DNA]</scope>
</reference>
<reference key="2">
    <citation type="book" date="2006" name="Gram positive pathogens, 2nd edition">
        <title>The Staphylococcus aureus NCTC 8325 genome.</title>
        <editorList>
            <person name="Fischetti V."/>
            <person name="Novick R."/>
            <person name="Ferretti J."/>
            <person name="Portnoy D."/>
            <person name="Rood J."/>
        </editorList>
        <authorList>
            <person name="Gillaspy A.F."/>
            <person name="Worrell V."/>
            <person name="Orvis J."/>
            <person name="Roe B.A."/>
            <person name="Dyer D.W."/>
            <person name="Iandolo J.J."/>
        </authorList>
    </citation>
    <scope>NUCLEOTIDE SEQUENCE [LARGE SCALE GENOMIC DNA]</scope>
    <source>
        <strain>NCTC 8325 / PS 47</strain>
    </source>
</reference>
<name>DPO3A_STAA8</name>
<feature type="chain" id="PRO_0000103342" description="DNA polymerase III subunit alpha">
    <location>
        <begin position="1"/>
        <end position="1065"/>
    </location>
</feature>
<sequence>MVAYLNIHTAYDLLNSSLKIEDAVRLAVSENVDALAITDTNVLYGFPKFYDACIANNIKPIFGMTIYVTNGLNTVETVVLAKNNDGLKDLYQLSSEIKMNALEHVSFELLKRFSNNMIIIFKKVGDQHRDIVQVFETHNDTYMDHLSISIQGRKHVWIQNVCYQTRQDADTISALAAIRDNTKLDLIHDQEDFGAHFLTEKEINQLDINQEYLTQVDVIAQKCDAELKYHQSLLPQYETPNDESAKKYLWRVLVTQLKKLELNYDVYLERLKYEYKVITNMGFEDYFLIVSDLIHYAKTNDVMVGPGRGSSAGSLVSYLLGITTIDPIKFNLLFERFLNPERVTMPDIDIDFEDTRRERVIQYVQEKYGELHVSGIVTFGHLLARAVARDVGRIMGFDEVTLNEISSLIPHKLGITLDEAYQIDDFKEFVHRNHRHERWFSICKKLEGLPRHTSTHAAGIIINDHPLYEYAPLTKGDTGLLTQWTMTEAERIGLLKIDFLGLRNLSIIHQILTQVKKDLGINIDIEKIPFDDQKVFELLSQGDTTGIFQLESDGVRSVLKKLKPEHFEDIVAVTSLYRPGPMEEIPTYITRRHDPSKVQYLHPHLEPILKNTYGVIIYQEQIMQIASTFANFSYGEADILRRAMSKKNRAVLESERQHFIEGAKQNGYHEDISKQIFDLILKFADYGFPRAHAVSYSKIAYIMSFLKVHYPNYFYANILSNVIGSEKKTAQMIEEAKKQGITILPPNINESHWFYKPSQEGIYLSIGTIKGVGYQSVKVIVDERYQNGKFKDFFDFARRIPKRVKTRKLLEALILVGAFDAFGKTRSTLLQAIDQVLDGDLNIEQDGFLFDILTPKQMYEDKEELPDALISQYEKEYLGFYVSQHPVDKKFVAKQYLTIFKLSNAQNYKPILVQFDKVKQIRTKNGQNMAFVTLNDGIETLDGVIFPNQFKKYEELLSHNDLFIVSGKFDHRKQQRQLIINEIQTLATFEEQKLAFAKQIIIRNKSQIDMFEEMIKATKENANDVVLSFYDETIKQMTTLGYINQKDSMFNNFIQSFNPSDIRLI</sequence>
<proteinExistence type="inferred from homology"/>
<keyword id="KW-0963">Cytoplasm</keyword>
<keyword id="KW-0235">DNA replication</keyword>
<keyword id="KW-0239">DNA-directed DNA polymerase</keyword>
<keyword id="KW-0548">Nucleotidyltransferase</keyword>
<keyword id="KW-1185">Reference proteome</keyword>
<keyword id="KW-0808">Transferase</keyword>
<evidence type="ECO:0000250" key="1"/>
<evidence type="ECO:0000305" key="2"/>
<dbReference type="EC" id="2.7.7.7"/>
<dbReference type="EMBL" id="AB053352">
    <property type="protein sequence ID" value="BAB20884.1"/>
    <property type="molecule type" value="Genomic_DNA"/>
</dbReference>
<dbReference type="EMBL" id="CP000253">
    <property type="protein sequence ID" value="ABD30879.1"/>
    <property type="molecule type" value="Genomic_DNA"/>
</dbReference>
<dbReference type="RefSeq" id="WP_000226907.1">
    <property type="nucleotide sequence ID" value="NZ_LS483365.1"/>
</dbReference>
<dbReference type="RefSeq" id="YP_500316.1">
    <property type="nucleotide sequence ID" value="NC_007795.1"/>
</dbReference>
<dbReference type="SMR" id="Q9F1K0"/>
<dbReference type="STRING" id="93061.SAOUHSC_01811"/>
<dbReference type="PaxDb" id="1280-SAXN108_1731"/>
<dbReference type="GeneID" id="3919281"/>
<dbReference type="KEGG" id="sao:SAOUHSC_01811"/>
<dbReference type="PATRIC" id="fig|93061.5.peg.1651"/>
<dbReference type="eggNOG" id="COG0587">
    <property type="taxonomic scope" value="Bacteria"/>
</dbReference>
<dbReference type="HOGENOM" id="CLU_001600_0_0_9"/>
<dbReference type="OrthoDB" id="9803237at2"/>
<dbReference type="PRO" id="PR:Q9F1K0"/>
<dbReference type="Proteomes" id="UP000008816">
    <property type="component" value="Chromosome"/>
</dbReference>
<dbReference type="GO" id="GO:0005737">
    <property type="term" value="C:cytoplasm"/>
    <property type="evidence" value="ECO:0007669"/>
    <property type="project" value="UniProtKB-SubCell"/>
</dbReference>
<dbReference type="GO" id="GO:0008408">
    <property type="term" value="F:3'-5' exonuclease activity"/>
    <property type="evidence" value="ECO:0007669"/>
    <property type="project" value="InterPro"/>
</dbReference>
<dbReference type="GO" id="GO:0003887">
    <property type="term" value="F:DNA-directed DNA polymerase activity"/>
    <property type="evidence" value="ECO:0000318"/>
    <property type="project" value="GO_Central"/>
</dbReference>
<dbReference type="GO" id="GO:0003676">
    <property type="term" value="F:nucleic acid binding"/>
    <property type="evidence" value="ECO:0007669"/>
    <property type="project" value="InterPro"/>
</dbReference>
<dbReference type="GO" id="GO:0006260">
    <property type="term" value="P:DNA replication"/>
    <property type="evidence" value="ECO:0007669"/>
    <property type="project" value="UniProtKB-KW"/>
</dbReference>
<dbReference type="CDD" id="cd04485">
    <property type="entry name" value="DnaE_OBF"/>
    <property type="match status" value="1"/>
</dbReference>
<dbReference type="CDD" id="cd07431">
    <property type="entry name" value="PHP_PolIIIA"/>
    <property type="match status" value="1"/>
</dbReference>
<dbReference type="Gene3D" id="1.10.150.870">
    <property type="match status" value="1"/>
</dbReference>
<dbReference type="Gene3D" id="1.10.10.1600">
    <property type="entry name" value="Bacterial DNA polymerase III alpha subunit, thumb domain"/>
    <property type="match status" value="1"/>
</dbReference>
<dbReference type="Gene3D" id="3.20.20.140">
    <property type="entry name" value="Metal-dependent hydrolases"/>
    <property type="match status" value="1"/>
</dbReference>
<dbReference type="InterPro" id="IPR011708">
    <property type="entry name" value="DNA_pol3_alpha_NTPase_dom"/>
</dbReference>
<dbReference type="InterPro" id="IPR041931">
    <property type="entry name" value="DNA_pol3_alpha_thumb_dom"/>
</dbReference>
<dbReference type="InterPro" id="IPR040982">
    <property type="entry name" value="DNA_pol3_finger"/>
</dbReference>
<dbReference type="InterPro" id="IPR004805">
    <property type="entry name" value="DnaE2/DnaE/PolC"/>
</dbReference>
<dbReference type="InterPro" id="IPR029460">
    <property type="entry name" value="DNAPol_HHH"/>
</dbReference>
<dbReference type="InterPro" id="IPR004365">
    <property type="entry name" value="NA-bd_OB_tRNA"/>
</dbReference>
<dbReference type="InterPro" id="IPR004013">
    <property type="entry name" value="PHP_dom"/>
</dbReference>
<dbReference type="InterPro" id="IPR003141">
    <property type="entry name" value="Pol/His_phosphatase_N"/>
</dbReference>
<dbReference type="InterPro" id="IPR016195">
    <property type="entry name" value="Pol/histidinol_Pase-like"/>
</dbReference>
<dbReference type="NCBIfam" id="TIGR00594">
    <property type="entry name" value="polc"/>
    <property type="match status" value="1"/>
</dbReference>
<dbReference type="PANTHER" id="PTHR32294">
    <property type="entry name" value="DNA POLYMERASE III SUBUNIT ALPHA"/>
    <property type="match status" value="1"/>
</dbReference>
<dbReference type="PANTHER" id="PTHR32294:SF0">
    <property type="entry name" value="DNA POLYMERASE III SUBUNIT ALPHA"/>
    <property type="match status" value="1"/>
</dbReference>
<dbReference type="Pfam" id="PF07733">
    <property type="entry name" value="DNA_pol3_alpha"/>
    <property type="match status" value="1"/>
</dbReference>
<dbReference type="Pfam" id="PF17657">
    <property type="entry name" value="DNA_pol3_finger"/>
    <property type="match status" value="1"/>
</dbReference>
<dbReference type="Pfam" id="PF14579">
    <property type="entry name" value="HHH_6"/>
    <property type="match status" value="1"/>
</dbReference>
<dbReference type="Pfam" id="PF02811">
    <property type="entry name" value="PHP"/>
    <property type="match status" value="1"/>
</dbReference>
<dbReference type="Pfam" id="PF01336">
    <property type="entry name" value="tRNA_anti-codon"/>
    <property type="match status" value="1"/>
</dbReference>
<dbReference type="SMART" id="SM00481">
    <property type="entry name" value="POLIIIAc"/>
    <property type="match status" value="1"/>
</dbReference>
<dbReference type="SUPFAM" id="SSF89550">
    <property type="entry name" value="PHP domain-like"/>
    <property type="match status" value="1"/>
</dbReference>
<accession>Q9F1K0</accession>
<accession>Q2FXM4</accession>
<gene>
    <name type="primary">dnaE</name>
    <name type="ordered locus">SAOUHSC_01811</name>
</gene>
<protein>
    <recommendedName>
        <fullName>DNA polymerase III subunit alpha</fullName>
        <ecNumber>2.7.7.7</ecNumber>
    </recommendedName>
</protein>
<comment type="function">
    <text evidence="1">DNA polymerase III is a complex, multichain enzyme responsible for most of the replicative synthesis in bacteria. This DNA polymerase also exhibits 3' to 5' exonuclease activity. The alpha chain is the DNA polymerase (By similarity).</text>
</comment>
<comment type="catalytic activity">
    <reaction>
        <text>DNA(n) + a 2'-deoxyribonucleoside 5'-triphosphate = DNA(n+1) + diphosphate</text>
        <dbReference type="Rhea" id="RHEA:22508"/>
        <dbReference type="Rhea" id="RHEA-COMP:17339"/>
        <dbReference type="Rhea" id="RHEA-COMP:17340"/>
        <dbReference type="ChEBI" id="CHEBI:33019"/>
        <dbReference type="ChEBI" id="CHEBI:61560"/>
        <dbReference type="ChEBI" id="CHEBI:173112"/>
        <dbReference type="EC" id="2.7.7.7"/>
    </reaction>
</comment>
<comment type="subunit">
    <text evidence="1">DNA polymerase III contains a core (composed of alpha, epsilon and theta chains) that associates with a tau subunit. This core dimerizes to form the PolIII' complex. PolIII' associates with the gamma complex (composed of gamma, delta, delta', psi and chi chains) and with the beta chain to form the complete DNA polymerase III complex (By similarity).</text>
</comment>
<comment type="subcellular location">
    <subcellularLocation>
        <location evidence="1">Cytoplasm</location>
    </subcellularLocation>
</comment>
<comment type="similarity">
    <text evidence="2">Belongs to the DNA polymerase type-C family. DnaE subfamily.</text>
</comment>